<evidence type="ECO:0000255" key="1">
    <source>
        <dbReference type="HAMAP-Rule" id="MF_00197"/>
    </source>
</evidence>
<feature type="chain" id="PRO_1000011901" description="Diaminopimelate epimerase">
    <location>
        <begin position="1"/>
        <end position="274"/>
    </location>
</feature>
<feature type="active site" description="Proton donor" evidence="1">
    <location>
        <position position="73"/>
    </location>
</feature>
<feature type="active site" description="Proton acceptor" evidence="1">
    <location>
        <position position="217"/>
    </location>
</feature>
<feature type="binding site" evidence="1">
    <location>
        <position position="11"/>
    </location>
    <ligand>
        <name>substrate</name>
    </ligand>
</feature>
<feature type="binding site" evidence="1">
    <location>
        <position position="44"/>
    </location>
    <ligand>
        <name>substrate</name>
    </ligand>
</feature>
<feature type="binding site" evidence="1">
    <location>
        <position position="64"/>
    </location>
    <ligand>
        <name>substrate</name>
    </ligand>
</feature>
<feature type="binding site" evidence="1">
    <location>
        <begin position="74"/>
        <end position="75"/>
    </location>
    <ligand>
        <name>substrate</name>
    </ligand>
</feature>
<feature type="binding site" evidence="1">
    <location>
        <position position="157"/>
    </location>
    <ligand>
        <name>substrate</name>
    </ligand>
</feature>
<feature type="binding site" evidence="1">
    <location>
        <position position="190"/>
    </location>
    <ligand>
        <name>substrate</name>
    </ligand>
</feature>
<feature type="binding site" evidence="1">
    <location>
        <begin position="208"/>
        <end position="209"/>
    </location>
    <ligand>
        <name>substrate</name>
    </ligand>
</feature>
<feature type="binding site" evidence="1">
    <location>
        <begin position="218"/>
        <end position="219"/>
    </location>
    <ligand>
        <name>substrate</name>
    </ligand>
</feature>
<feature type="site" description="Could be important to modulate the pK values of the two catalytic cysteine residues" evidence="1">
    <location>
        <position position="159"/>
    </location>
</feature>
<feature type="site" description="Could be important to modulate the pK values of the two catalytic cysteine residues" evidence="1">
    <location>
        <position position="208"/>
    </location>
</feature>
<feature type="site" description="Important for dimerization" evidence="1">
    <location>
        <position position="268"/>
    </location>
</feature>
<organism>
    <name type="scientific">Mannheimia succiniciproducens (strain KCTC 0769BP / MBEL55E)</name>
    <dbReference type="NCBI Taxonomy" id="221988"/>
    <lineage>
        <taxon>Bacteria</taxon>
        <taxon>Pseudomonadati</taxon>
        <taxon>Pseudomonadota</taxon>
        <taxon>Gammaproteobacteria</taxon>
        <taxon>Pasteurellales</taxon>
        <taxon>Pasteurellaceae</taxon>
        <taxon>Basfia</taxon>
    </lineage>
</organism>
<proteinExistence type="inferred from homology"/>
<protein>
    <recommendedName>
        <fullName evidence="1">Diaminopimelate epimerase</fullName>
        <shortName evidence="1">DAP epimerase</shortName>
        <ecNumber evidence="1">5.1.1.7</ecNumber>
    </recommendedName>
    <alternativeName>
        <fullName evidence="1">PLP-independent amino acid racemase</fullName>
    </alternativeName>
</protein>
<dbReference type="EC" id="5.1.1.7" evidence="1"/>
<dbReference type="EMBL" id="AE016827">
    <property type="protein sequence ID" value="AAU38391.1"/>
    <property type="molecule type" value="Genomic_DNA"/>
</dbReference>
<dbReference type="RefSeq" id="WP_011200949.1">
    <property type="nucleotide sequence ID" value="NC_006300.1"/>
</dbReference>
<dbReference type="SMR" id="Q65RL9"/>
<dbReference type="STRING" id="221988.MS1784"/>
<dbReference type="KEGG" id="msu:MS1784"/>
<dbReference type="eggNOG" id="COG0253">
    <property type="taxonomic scope" value="Bacteria"/>
</dbReference>
<dbReference type="HOGENOM" id="CLU_053306_1_1_6"/>
<dbReference type="OrthoDB" id="9805408at2"/>
<dbReference type="UniPathway" id="UPA00034">
    <property type="reaction ID" value="UER00025"/>
</dbReference>
<dbReference type="Proteomes" id="UP000000607">
    <property type="component" value="Chromosome"/>
</dbReference>
<dbReference type="GO" id="GO:0005829">
    <property type="term" value="C:cytosol"/>
    <property type="evidence" value="ECO:0007669"/>
    <property type="project" value="TreeGrafter"/>
</dbReference>
<dbReference type="GO" id="GO:0008837">
    <property type="term" value="F:diaminopimelate epimerase activity"/>
    <property type="evidence" value="ECO:0007669"/>
    <property type="project" value="UniProtKB-UniRule"/>
</dbReference>
<dbReference type="GO" id="GO:0009089">
    <property type="term" value="P:lysine biosynthetic process via diaminopimelate"/>
    <property type="evidence" value="ECO:0007669"/>
    <property type="project" value="UniProtKB-UniRule"/>
</dbReference>
<dbReference type="FunFam" id="3.10.310.10:FF:000001">
    <property type="entry name" value="Diaminopimelate epimerase"/>
    <property type="match status" value="1"/>
</dbReference>
<dbReference type="FunFam" id="3.10.310.10:FF:000002">
    <property type="entry name" value="Diaminopimelate epimerase"/>
    <property type="match status" value="1"/>
</dbReference>
<dbReference type="Gene3D" id="3.10.310.10">
    <property type="entry name" value="Diaminopimelate Epimerase, Chain A, domain 1"/>
    <property type="match status" value="2"/>
</dbReference>
<dbReference type="HAMAP" id="MF_00197">
    <property type="entry name" value="DAP_epimerase"/>
    <property type="match status" value="1"/>
</dbReference>
<dbReference type="InterPro" id="IPR018510">
    <property type="entry name" value="DAP_epimerase_AS"/>
</dbReference>
<dbReference type="InterPro" id="IPR001653">
    <property type="entry name" value="DAP_epimerase_DapF"/>
</dbReference>
<dbReference type="NCBIfam" id="TIGR00652">
    <property type="entry name" value="DapF"/>
    <property type="match status" value="1"/>
</dbReference>
<dbReference type="PANTHER" id="PTHR31689:SF0">
    <property type="entry name" value="DIAMINOPIMELATE EPIMERASE"/>
    <property type="match status" value="1"/>
</dbReference>
<dbReference type="PANTHER" id="PTHR31689">
    <property type="entry name" value="DIAMINOPIMELATE EPIMERASE, CHLOROPLASTIC"/>
    <property type="match status" value="1"/>
</dbReference>
<dbReference type="Pfam" id="PF01678">
    <property type="entry name" value="DAP_epimerase"/>
    <property type="match status" value="2"/>
</dbReference>
<dbReference type="SUPFAM" id="SSF54506">
    <property type="entry name" value="Diaminopimelate epimerase-like"/>
    <property type="match status" value="1"/>
</dbReference>
<dbReference type="PROSITE" id="PS01326">
    <property type="entry name" value="DAP_EPIMERASE"/>
    <property type="match status" value="1"/>
</dbReference>
<name>DAPF_MANSM</name>
<sequence length="274" mass="30254">MQFSKMHGLGNDFVVVDAVTQNVYFPEEVIKKLADRHRGIGFDQMLIVEPPYDPELDFHYRIFNADGSEVAQCGNGARCFARFVTLKGLTDKKDIAVSTTNGKMILTVQDDGMIRVNMGEPVWEPAKIPFIANKFEKNYILRTDIQTVLCGAVSMGNPHCTLVVDDVETANVTELGPLLENHERFPERVNVGFMQVINPNHIKLRVYERGAGETQACGSGACAAAAIGIMQGLLENKVQVDLPGGSLWIEWQGEGHPLYMTGDATHVYDGVIKL</sequence>
<comment type="function">
    <text evidence="1">Catalyzes the stereoinversion of LL-2,6-diaminopimelate (L,L-DAP) to meso-diaminopimelate (meso-DAP), a precursor of L-lysine and an essential component of the bacterial peptidoglycan.</text>
</comment>
<comment type="catalytic activity">
    <reaction evidence="1">
        <text>(2S,6S)-2,6-diaminopimelate = meso-2,6-diaminopimelate</text>
        <dbReference type="Rhea" id="RHEA:15393"/>
        <dbReference type="ChEBI" id="CHEBI:57609"/>
        <dbReference type="ChEBI" id="CHEBI:57791"/>
        <dbReference type="EC" id="5.1.1.7"/>
    </reaction>
</comment>
<comment type="pathway">
    <text evidence="1">Amino-acid biosynthesis; L-lysine biosynthesis via DAP pathway; DL-2,6-diaminopimelate from LL-2,6-diaminopimelate: step 1/1.</text>
</comment>
<comment type="subunit">
    <text evidence="1">Homodimer.</text>
</comment>
<comment type="subcellular location">
    <subcellularLocation>
        <location evidence="1">Cytoplasm</location>
    </subcellularLocation>
</comment>
<comment type="similarity">
    <text evidence="1">Belongs to the diaminopimelate epimerase family.</text>
</comment>
<keyword id="KW-0028">Amino-acid biosynthesis</keyword>
<keyword id="KW-0963">Cytoplasm</keyword>
<keyword id="KW-0413">Isomerase</keyword>
<keyword id="KW-0457">Lysine biosynthesis</keyword>
<reference key="1">
    <citation type="journal article" date="2004" name="Nat. Biotechnol.">
        <title>The genome sequence of the capnophilic rumen bacterium Mannheimia succiniciproducens.</title>
        <authorList>
            <person name="Hong S.H."/>
            <person name="Kim J.S."/>
            <person name="Lee S.Y."/>
            <person name="In Y.H."/>
            <person name="Choi S.S."/>
            <person name="Rih J.-K."/>
            <person name="Kim C.H."/>
            <person name="Jeong H."/>
            <person name="Hur C.G."/>
            <person name="Kim J.J."/>
        </authorList>
    </citation>
    <scope>NUCLEOTIDE SEQUENCE [LARGE SCALE GENOMIC DNA]</scope>
    <source>
        <strain>KCTC 0769BP / MBEL55E</strain>
    </source>
</reference>
<accession>Q65RL9</accession>
<gene>
    <name evidence="1" type="primary">dapF</name>
    <name type="ordered locus">MS1784</name>
</gene>